<keyword id="KW-0378">Hydrolase</keyword>
<keyword id="KW-1185">Reference proteome</keyword>
<keyword id="KW-0677">Repeat</keyword>
<keyword id="KW-0964">Secreted</keyword>
<keyword id="KW-0732">Signal</keyword>
<keyword id="KW-0843">Virulence</keyword>
<comment type="function">
    <text evidence="1">Not known; immunogenic protein.</text>
</comment>
<comment type="subcellular location">
    <subcellularLocation>
        <location evidence="4">Secreted</location>
    </subcellularLocation>
</comment>
<comment type="induction">
    <text evidence="4">More protein is secreted in a secG or double secG/secY2 mutant (at protein level).</text>
</comment>
<protein>
    <recommendedName>
        <fullName>Staphylococcal secretory antigen ssaA2</fullName>
    </recommendedName>
</protein>
<proteinExistence type="evidence at protein level"/>
<accession>Q2G2J2</accession>
<organism>
    <name type="scientific">Staphylococcus aureus (strain NCTC 8325 / PS 47)</name>
    <dbReference type="NCBI Taxonomy" id="93061"/>
    <lineage>
        <taxon>Bacteria</taxon>
        <taxon>Bacillati</taxon>
        <taxon>Bacillota</taxon>
        <taxon>Bacilli</taxon>
        <taxon>Bacillales</taxon>
        <taxon>Staphylococcaceae</taxon>
        <taxon>Staphylococcus</taxon>
    </lineage>
</organism>
<evidence type="ECO:0000250" key="1"/>
<evidence type="ECO:0000255" key="2"/>
<evidence type="ECO:0000255" key="3">
    <source>
        <dbReference type="PROSITE-ProRule" id="PRU00048"/>
    </source>
</evidence>
<evidence type="ECO:0000269" key="4">
    <source>
    </source>
</evidence>
<dbReference type="EMBL" id="CP000253">
    <property type="protein sequence ID" value="ABD31583.1"/>
    <property type="molecule type" value="Genomic_DNA"/>
</dbReference>
<dbReference type="RefSeq" id="WP_000717381.1">
    <property type="nucleotide sequence ID" value="NZ_LS483365.1"/>
</dbReference>
<dbReference type="RefSeq" id="YP_501032.1">
    <property type="nucleotide sequence ID" value="NC_007795.1"/>
</dbReference>
<dbReference type="SMR" id="Q2G2J2"/>
<dbReference type="STRING" id="93061.SAOUHSC_02571"/>
<dbReference type="PaxDb" id="1280-SAXN108_2547"/>
<dbReference type="GeneID" id="3921568"/>
<dbReference type="KEGG" id="sao:SAOUHSC_02571"/>
<dbReference type="PATRIC" id="fig|93061.5.peg.2319"/>
<dbReference type="eggNOG" id="COG3942">
    <property type="taxonomic scope" value="Bacteria"/>
</dbReference>
<dbReference type="HOGENOM" id="CLU_016043_11_0_9"/>
<dbReference type="OrthoDB" id="2389353at2"/>
<dbReference type="PRO" id="PR:Q2G2J2"/>
<dbReference type="Proteomes" id="UP000008816">
    <property type="component" value="Chromosome"/>
</dbReference>
<dbReference type="GO" id="GO:0005576">
    <property type="term" value="C:extracellular region"/>
    <property type="evidence" value="ECO:0007669"/>
    <property type="project" value="UniProtKB-SubCell"/>
</dbReference>
<dbReference type="GO" id="GO:0016787">
    <property type="term" value="F:hydrolase activity"/>
    <property type="evidence" value="ECO:0007669"/>
    <property type="project" value="UniProtKB-KW"/>
</dbReference>
<dbReference type="Gene3D" id="3.90.1720.10">
    <property type="entry name" value="endopeptidase domain like (from Nostoc punctiforme)"/>
    <property type="match status" value="1"/>
</dbReference>
<dbReference type="InterPro" id="IPR007921">
    <property type="entry name" value="CHAP_dom"/>
</dbReference>
<dbReference type="InterPro" id="IPR038765">
    <property type="entry name" value="Papain-like_cys_pep_sf"/>
</dbReference>
<dbReference type="Pfam" id="PF05257">
    <property type="entry name" value="CHAP"/>
    <property type="match status" value="1"/>
</dbReference>
<dbReference type="SUPFAM" id="SSF54001">
    <property type="entry name" value="Cysteine proteinases"/>
    <property type="match status" value="1"/>
</dbReference>
<dbReference type="PROSITE" id="PS50911">
    <property type="entry name" value="CHAP"/>
    <property type="match status" value="1"/>
</dbReference>
<feature type="signal peptide" evidence="2">
    <location>
        <begin position="1"/>
        <end position="27"/>
    </location>
</feature>
<feature type="chain" id="PRO_0000414599" description="Staphylococcal secretory antigen ssaA2">
    <location>
        <begin position="28"/>
        <end position="267"/>
    </location>
</feature>
<feature type="repeat" description="1">
    <location>
        <begin position="83"/>
        <end position="85"/>
    </location>
</feature>
<feature type="repeat" description="2">
    <location>
        <begin position="86"/>
        <end position="88"/>
    </location>
</feature>
<feature type="repeat" description="3">
    <location>
        <begin position="89"/>
        <end position="91"/>
    </location>
</feature>
<feature type="repeat" description="4">
    <location>
        <begin position="95"/>
        <end position="97"/>
    </location>
</feature>
<feature type="repeat" description="5">
    <location>
        <begin position="101"/>
        <end position="103"/>
    </location>
</feature>
<feature type="repeat" description="6">
    <location>
        <begin position="104"/>
        <end position="106"/>
    </location>
</feature>
<feature type="repeat" description="7">
    <location>
        <begin position="113"/>
        <end position="115"/>
    </location>
</feature>
<feature type="domain" description="Peptidase C51" evidence="3">
    <location>
        <begin position="146"/>
        <end position="267"/>
    </location>
</feature>
<feature type="region of interest" description="7 X 3 AA repeats of Y-[NS]-N">
    <location>
        <begin position="83"/>
        <end position="115"/>
    </location>
</feature>
<reference key="1">
    <citation type="book" date="2006" name="Gram positive pathogens, 2nd edition">
        <title>The Staphylococcus aureus NCTC 8325 genome.</title>
        <editorList>
            <person name="Fischetti V."/>
            <person name="Novick R."/>
            <person name="Ferretti J."/>
            <person name="Portnoy D."/>
            <person name="Rood J."/>
        </editorList>
        <authorList>
            <person name="Gillaspy A.F."/>
            <person name="Worrell V."/>
            <person name="Orvis J."/>
            <person name="Roe B.A."/>
            <person name="Dyer D.W."/>
            <person name="Iandolo J.J."/>
        </authorList>
    </citation>
    <scope>NUCLEOTIDE SEQUENCE [LARGE SCALE GENOMIC DNA]</scope>
    <source>
        <strain>NCTC 8325 / PS 47</strain>
    </source>
</reference>
<reference key="2">
    <citation type="journal article" date="2010" name="J. Bacteriol.">
        <title>Synthetic effects of secG and secY2 mutations on exoproteome biogenesis in Staphylococcus aureus.</title>
        <authorList>
            <person name="Sibbald M.J."/>
            <person name="Winter T."/>
            <person name="van der Kooi-Pol M.M."/>
            <person name="Buist G."/>
            <person name="Tsompanidou E."/>
            <person name="Bosma T."/>
            <person name="Schafer T."/>
            <person name="Ohlsen K."/>
            <person name="Hecker M."/>
            <person name="Antelmann H."/>
            <person name="Engelmann S."/>
            <person name="van Dijl J.M."/>
        </authorList>
    </citation>
    <scope>IDENTIFICATION BY MASS SPECTROMETRY</scope>
    <scope>SUBCELLULAR LOCATION</scope>
    <scope>INDUCTION</scope>
    <source>
        <strain>RN4220</strain>
    </source>
</reference>
<sequence length="267" mass="29327">MKKIATATIATAGFATIAIASGNQAHASEQDNYGYNPNDPTSYSYTYTIDAQGNYHYTWKGNWHPSQLNQDNGYYSYYYYNGYNNYNNYNNGYSYNNYSRYNNYSNNNQSYNYNNYNSYNTNSYRTGGLGASYSTSSNNVQVTTTMAPSSNGRSISSGYTSGRNLYTSGQCTYYVFDRVGGKIGSTWGNASNWANAAARAGYTVNNTPKAGAIMQTTQGAYGHVAYVESVNSNGSVRVSEMNYGYGPGVVTSRTISASQAAGYNFIH</sequence>
<gene>
    <name type="primary">ssaA2</name>
    <name type="ordered locus">SAOUHSC_02571</name>
</gene>
<name>SSAA2_STAA8</name>